<name>P5CR_SOYBN</name>
<organism>
    <name type="scientific">Glycine max</name>
    <name type="common">Soybean</name>
    <name type="synonym">Glycine hispida</name>
    <dbReference type="NCBI Taxonomy" id="3847"/>
    <lineage>
        <taxon>Eukaryota</taxon>
        <taxon>Viridiplantae</taxon>
        <taxon>Streptophyta</taxon>
        <taxon>Embryophyta</taxon>
        <taxon>Tracheophyta</taxon>
        <taxon>Spermatophyta</taxon>
        <taxon>Magnoliopsida</taxon>
        <taxon>eudicotyledons</taxon>
        <taxon>Gunneridae</taxon>
        <taxon>Pentapetalae</taxon>
        <taxon>rosids</taxon>
        <taxon>fabids</taxon>
        <taxon>Fabales</taxon>
        <taxon>Fabaceae</taxon>
        <taxon>Papilionoideae</taxon>
        <taxon>50 kb inversion clade</taxon>
        <taxon>NPAAA clade</taxon>
        <taxon>indigoferoid/millettioid clade</taxon>
        <taxon>Phaseoleae</taxon>
        <taxon>Glycine</taxon>
        <taxon>Glycine subgen. Soja</taxon>
    </lineage>
</organism>
<accession>P17817</accession>
<keyword id="KW-0028">Amino-acid biosynthesis</keyword>
<keyword id="KW-0963">Cytoplasm</keyword>
<keyword id="KW-0521">NADP</keyword>
<keyword id="KW-0560">Oxidoreductase</keyword>
<keyword id="KW-0641">Proline biosynthesis</keyword>
<keyword id="KW-1185">Reference proteome</keyword>
<dbReference type="EC" id="1.5.1.2"/>
<dbReference type="EMBL" id="X16352">
    <property type="protein sequence ID" value="CAA34401.1"/>
    <property type="molecule type" value="mRNA"/>
</dbReference>
<dbReference type="PIR" id="S10186">
    <property type="entry name" value="S10186"/>
</dbReference>
<dbReference type="RefSeq" id="NP_001235914.1">
    <property type="nucleotide sequence ID" value="NM_001248985.1"/>
</dbReference>
<dbReference type="SMR" id="P17817"/>
<dbReference type="FunCoup" id="P17817">
    <property type="interactions" value="3515"/>
</dbReference>
<dbReference type="STRING" id="3847.P17817"/>
<dbReference type="PaxDb" id="3847-GLYMA19G31230.1"/>
<dbReference type="GeneID" id="547907"/>
<dbReference type="KEGG" id="gmx:547907"/>
<dbReference type="eggNOG" id="KOG3124">
    <property type="taxonomic scope" value="Eukaryota"/>
</dbReference>
<dbReference type="HOGENOM" id="CLU_042344_3_1_1"/>
<dbReference type="InParanoid" id="P17817"/>
<dbReference type="OrthoDB" id="10263291at2759"/>
<dbReference type="UniPathway" id="UPA00098">
    <property type="reaction ID" value="UER00361"/>
</dbReference>
<dbReference type="Proteomes" id="UP000008827">
    <property type="component" value="Unplaced"/>
</dbReference>
<dbReference type="GO" id="GO:0005737">
    <property type="term" value="C:cytoplasm"/>
    <property type="evidence" value="ECO:0007669"/>
    <property type="project" value="UniProtKB-SubCell"/>
</dbReference>
<dbReference type="GO" id="GO:0004735">
    <property type="term" value="F:pyrroline-5-carboxylate reductase activity"/>
    <property type="evidence" value="ECO:0000318"/>
    <property type="project" value="GO_Central"/>
</dbReference>
<dbReference type="GO" id="GO:0055129">
    <property type="term" value="P:L-proline biosynthetic process"/>
    <property type="evidence" value="ECO:0000318"/>
    <property type="project" value="GO_Central"/>
</dbReference>
<dbReference type="FunFam" id="1.10.3730.10:FF:000001">
    <property type="entry name" value="Pyrroline-5-carboxylate reductase"/>
    <property type="match status" value="1"/>
</dbReference>
<dbReference type="FunFam" id="3.40.50.720:FF:000190">
    <property type="entry name" value="Pyrroline-5-carboxylate reductase"/>
    <property type="match status" value="1"/>
</dbReference>
<dbReference type="Gene3D" id="3.40.50.720">
    <property type="entry name" value="NAD(P)-binding Rossmann-like Domain"/>
    <property type="match status" value="1"/>
</dbReference>
<dbReference type="Gene3D" id="1.10.3730.10">
    <property type="entry name" value="ProC C-terminal domain-like"/>
    <property type="match status" value="1"/>
</dbReference>
<dbReference type="HAMAP" id="MF_01925">
    <property type="entry name" value="P5C_reductase"/>
    <property type="match status" value="1"/>
</dbReference>
<dbReference type="InterPro" id="IPR008927">
    <property type="entry name" value="6-PGluconate_DH-like_C_sf"/>
</dbReference>
<dbReference type="InterPro" id="IPR036291">
    <property type="entry name" value="NAD(P)-bd_dom_sf"/>
</dbReference>
<dbReference type="InterPro" id="IPR028939">
    <property type="entry name" value="P5C_Rdtase_cat_N"/>
</dbReference>
<dbReference type="InterPro" id="IPR053790">
    <property type="entry name" value="P5CR-like_CS"/>
</dbReference>
<dbReference type="InterPro" id="IPR029036">
    <property type="entry name" value="P5CR_dimer"/>
</dbReference>
<dbReference type="InterPro" id="IPR000304">
    <property type="entry name" value="Pyrroline-COOH_reductase"/>
</dbReference>
<dbReference type="NCBIfam" id="TIGR00112">
    <property type="entry name" value="proC"/>
    <property type="match status" value="1"/>
</dbReference>
<dbReference type="PANTHER" id="PTHR11645">
    <property type="entry name" value="PYRROLINE-5-CARBOXYLATE REDUCTASE"/>
    <property type="match status" value="1"/>
</dbReference>
<dbReference type="PANTHER" id="PTHR11645:SF0">
    <property type="entry name" value="PYRROLINE-5-CARBOXYLATE REDUCTASE 3"/>
    <property type="match status" value="1"/>
</dbReference>
<dbReference type="Pfam" id="PF03807">
    <property type="entry name" value="F420_oxidored"/>
    <property type="match status" value="1"/>
</dbReference>
<dbReference type="Pfam" id="PF14748">
    <property type="entry name" value="P5CR_dimer"/>
    <property type="match status" value="1"/>
</dbReference>
<dbReference type="PIRSF" id="PIRSF000193">
    <property type="entry name" value="Pyrrol-5-carb_rd"/>
    <property type="match status" value="1"/>
</dbReference>
<dbReference type="SUPFAM" id="SSF48179">
    <property type="entry name" value="6-phosphogluconate dehydrogenase C-terminal domain-like"/>
    <property type="match status" value="1"/>
</dbReference>
<dbReference type="SUPFAM" id="SSF51735">
    <property type="entry name" value="NAD(P)-binding Rossmann-fold domains"/>
    <property type="match status" value="1"/>
</dbReference>
<dbReference type="PROSITE" id="PS00521">
    <property type="entry name" value="P5CR"/>
    <property type="match status" value="1"/>
</dbReference>
<comment type="catalytic activity">
    <reaction>
        <text>L-proline + NADP(+) = (S)-1-pyrroline-5-carboxylate + NADPH + 2 H(+)</text>
        <dbReference type="Rhea" id="RHEA:14109"/>
        <dbReference type="ChEBI" id="CHEBI:15378"/>
        <dbReference type="ChEBI" id="CHEBI:17388"/>
        <dbReference type="ChEBI" id="CHEBI:57783"/>
        <dbReference type="ChEBI" id="CHEBI:58349"/>
        <dbReference type="ChEBI" id="CHEBI:60039"/>
        <dbReference type="EC" id="1.5.1.2"/>
    </reaction>
</comment>
<comment type="catalytic activity">
    <reaction>
        <text>L-proline + NAD(+) = (S)-1-pyrroline-5-carboxylate + NADH + 2 H(+)</text>
        <dbReference type="Rhea" id="RHEA:14105"/>
        <dbReference type="ChEBI" id="CHEBI:15378"/>
        <dbReference type="ChEBI" id="CHEBI:17388"/>
        <dbReference type="ChEBI" id="CHEBI:57540"/>
        <dbReference type="ChEBI" id="CHEBI:57945"/>
        <dbReference type="ChEBI" id="CHEBI:60039"/>
        <dbReference type="EC" id="1.5.1.2"/>
    </reaction>
</comment>
<comment type="pathway">
    <text>Amino-acid biosynthesis; L-proline biosynthesis; L-proline from L-glutamate 5-semialdehyde: step 1/1.</text>
</comment>
<comment type="subcellular location">
    <subcellularLocation>
        <location>Cytoplasm</location>
    </subcellularLocation>
</comment>
<comment type="tissue specificity">
    <text>Expressed in all plant tissues, but mostly in nodules.</text>
</comment>
<comment type="similarity">
    <text evidence="1">Belongs to the pyrroline-5-carboxylate reductase family.</text>
</comment>
<reference key="1">
    <citation type="journal article" date="1990" name="Mol. Gen. Genet.">
        <title>A soybean gene encoding delta 1-pyrroline-5-carboxylate reductase was isolated by functional complementation in Escherichia coli and is found to be osmoregulated.</title>
        <authorList>
            <person name="Delauney A.J."/>
            <person name="Verma D.P.S."/>
        </authorList>
    </citation>
    <scope>NUCLEOTIDE SEQUENCE [MRNA]</scope>
</reference>
<protein>
    <recommendedName>
        <fullName>Pyrroline-5-carboxylate reductase</fullName>
        <shortName>P5C reductase</shortName>
        <shortName>P5CR</shortName>
        <ecNumber>1.5.1.2</ecNumber>
    </recommendedName>
</protein>
<evidence type="ECO:0000305" key="1"/>
<proteinExistence type="evidence at transcript level"/>
<sequence length="274" mass="28586">MEIFPIPAESYTLGFIGAGKMAESIARGAVRSGVLPPSRIRTAVHFNLARRGAFESFGVTVLPSNDDVVRESDVVVLSVKPQLVKDVVSKLTPLLTKHKLLVSVAAGTKLKDLQEWAGNDRFIRVMPNTPAAVGQAASVMSLGGSATEEDGNIIAQLFGSIGKIWKAEEKYFDAITGLSGSGPAYVYLAIEALADGGVAAGLPRDLSLSLASQTVLGAASMVSQTGKHPGQLKDDVTSPGGTTITGIHELENGGFRGTLMNAVVAAAKRSRELS</sequence>
<feature type="chain" id="PRO_0000187325" description="Pyrroline-5-carboxylate reductase">
    <location>
        <begin position="1"/>
        <end position="274"/>
    </location>
</feature>